<sequence>MKLTCVLIVAVLVLTACQFTAAIDSRDGQDNPALRSTGGMQRKSQTQRLSKKCIPDHHGCGLLHHSRYCCNGTCFFVCIP</sequence>
<organism>
    <name type="scientific">Californiconus californicus</name>
    <name type="common">California cone</name>
    <name type="synonym">Conus californicus</name>
    <dbReference type="NCBI Taxonomy" id="1736779"/>
    <lineage>
        <taxon>Eukaryota</taxon>
        <taxon>Metazoa</taxon>
        <taxon>Spiralia</taxon>
        <taxon>Lophotrochozoa</taxon>
        <taxon>Mollusca</taxon>
        <taxon>Gastropoda</taxon>
        <taxon>Caenogastropoda</taxon>
        <taxon>Neogastropoda</taxon>
        <taxon>Conoidea</taxon>
        <taxon>Conidae</taxon>
        <taxon>Californiconus</taxon>
    </lineage>
</organism>
<name>O165_CONCL</name>
<keyword id="KW-1015">Disulfide bond</keyword>
<keyword id="KW-0960">Knottin</keyword>
<keyword id="KW-0528">Neurotoxin</keyword>
<keyword id="KW-0964">Secreted</keyword>
<keyword id="KW-0732">Signal</keyword>
<keyword id="KW-0800">Toxin</keyword>
<reference key="1">
    <citation type="journal article" date="2010" name="Mol. Phylogenet. Evol.">
        <title>Evolution of Conus peptide toxins: analysis of Conus californicus Reeve, 1844.</title>
        <authorList>
            <person name="Biggs J.S."/>
            <person name="Watkins M."/>
            <person name="Puillandre N."/>
            <person name="Ownby J.P."/>
            <person name="Lopez-Vera E."/>
            <person name="Christensen S."/>
            <person name="Moreno K.J."/>
            <person name="Bernaldez J."/>
            <person name="Licea-Navarro A."/>
            <person name="Corneli P.S."/>
            <person name="Olivera B.M."/>
        </authorList>
    </citation>
    <scope>NUCLEOTIDE SEQUENCE [GENOMIC DNA]</scope>
</reference>
<protein>
    <recommendedName>
        <fullName>Conotoxin Cl6.5</fullName>
    </recommendedName>
</protein>
<feature type="signal peptide" evidence="2">
    <location>
        <begin position="1"/>
        <end position="22"/>
    </location>
</feature>
<feature type="propeptide" id="PRO_0000414979" evidence="1">
    <location>
        <begin position="23"/>
        <end position="50"/>
    </location>
</feature>
<feature type="peptide" id="PRO_0000414980" description="Conotoxin Cl6.5">
    <location>
        <begin position="53"/>
        <end position="80"/>
    </location>
</feature>
<feature type="region of interest" description="Disordered" evidence="3">
    <location>
        <begin position="26"/>
        <end position="45"/>
    </location>
</feature>
<feature type="disulfide bond" evidence="1">
    <location>
        <begin position="53"/>
        <end position="70"/>
    </location>
</feature>
<feature type="disulfide bond" evidence="1">
    <location>
        <begin position="60"/>
        <end position="74"/>
    </location>
</feature>
<feature type="disulfide bond" evidence="1">
    <location>
        <begin position="69"/>
        <end position="78"/>
    </location>
</feature>
<dbReference type="EMBL" id="FJ959154">
    <property type="protein sequence ID" value="ADB93124.1"/>
    <property type="molecule type" value="Genomic_DNA"/>
</dbReference>
<dbReference type="SMR" id="D6C4L2"/>
<dbReference type="ConoServer" id="4038">
    <property type="toxin name" value="Cal6.5 precursor"/>
</dbReference>
<dbReference type="GO" id="GO:0005576">
    <property type="term" value="C:extracellular region"/>
    <property type="evidence" value="ECO:0007669"/>
    <property type="project" value="UniProtKB-SubCell"/>
</dbReference>
<dbReference type="GO" id="GO:0008200">
    <property type="term" value="F:ion channel inhibitor activity"/>
    <property type="evidence" value="ECO:0007669"/>
    <property type="project" value="InterPro"/>
</dbReference>
<dbReference type="GO" id="GO:0090729">
    <property type="term" value="F:toxin activity"/>
    <property type="evidence" value="ECO:0007669"/>
    <property type="project" value="UniProtKB-KW"/>
</dbReference>
<dbReference type="InterPro" id="IPR004214">
    <property type="entry name" value="Conotoxin"/>
</dbReference>
<dbReference type="Pfam" id="PF02950">
    <property type="entry name" value="Conotoxin"/>
    <property type="match status" value="1"/>
</dbReference>
<comment type="subcellular location">
    <subcellularLocation>
        <location evidence="1">Secreted</location>
    </subcellularLocation>
</comment>
<comment type="tissue specificity">
    <text>Expressed by the venom duct.</text>
</comment>
<comment type="domain">
    <text evidence="1">The presence of a 'disulfide through disulfide knot' structurally defines this protein as a knottin.</text>
</comment>
<comment type="domain">
    <text>The cysteine framework is VI/VII (C-C-CC-C-C).</text>
</comment>
<comment type="similarity">
    <text evidence="4">Belongs to the conotoxin O1 superfamily.</text>
</comment>
<evidence type="ECO:0000250" key="1"/>
<evidence type="ECO:0000255" key="2"/>
<evidence type="ECO:0000256" key="3">
    <source>
        <dbReference type="SAM" id="MobiDB-lite"/>
    </source>
</evidence>
<evidence type="ECO:0000305" key="4"/>
<proteinExistence type="inferred from homology"/>
<accession>D6C4L2</accession>